<protein>
    <recommendedName>
        <fullName evidence="1">FMN-dependent NADH:quinone oxidoreductase 4</fullName>
        <ecNumber evidence="1">1.6.5.-</ecNumber>
    </recommendedName>
    <alternativeName>
        <fullName evidence="1">Azo-dye reductase 4</fullName>
    </alternativeName>
    <alternativeName>
        <fullName evidence="1">FMN-dependent NADH-azo compound oxidoreductase 4</fullName>
    </alternativeName>
    <alternativeName>
        <fullName evidence="1">FMN-dependent NADH-azoreductase 4</fullName>
        <ecNumber evidence="1">1.7.1.17</ecNumber>
    </alternativeName>
</protein>
<sequence>MATVLFVKANNRPAEQAVSVKLYEAFLANYKEAHPNDTVVELDLYKEELPYVGVDMINGTFKAGKGFDLTEEEAKAVAVADKYLNQFLEADKVVFGFPLWNLTIPAVLHTYIDYLNRAGKTFKYTPEGPVGLIGDKKIALLNARGGVYSEGPAAEVEMAVKYVASMMGFFGATNMETVVIEGHNQFPDKAEEIIAAGLEEAAKVASKF</sequence>
<dbReference type="EC" id="1.6.5.-" evidence="1"/>
<dbReference type="EC" id="1.7.1.17" evidence="1"/>
<dbReference type="EMBL" id="AE017194">
    <property type="protein sequence ID" value="AAS44439.1"/>
    <property type="molecule type" value="Genomic_DNA"/>
</dbReference>
<dbReference type="SMR" id="Q72X39"/>
<dbReference type="KEGG" id="bca:BCE_5539"/>
<dbReference type="HOGENOM" id="CLU_088964_3_1_9"/>
<dbReference type="Proteomes" id="UP000002527">
    <property type="component" value="Chromosome"/>
</dbReference>
<dbReference type="GO" id="GO:0009055">
    <property type="term" value="F:electron transfer activity"/>
    <property type="evidence" value="ECO:0007669"/>
    <property type="project" value="UniProtKB-UniRule"/>
</dbReference>
<dbReference type="GO" id="GO:0010181">
    <property type="term" value="F:FMN binding"/>
    <property type="evidence" value="ECO:0007669"/>
    <property type="project" value="UniProtKB-UniRule"/>
</dbReference>
<dbReference type="GO" id="GO:0016652">
    <property type="term" value="F:oxidoreductase activity, acting on NAD(P)H as acceptor"/>
    <property type="evidence" value="ECO:0007669"/>
    <property type="project" value="UniProtKB-UniRule"/>
</dbReference>
<dbReference type="GO" id="GO:0016655">
    <property type="term" value="F:oxidoreductase activity, acting on NAD(P)H, quinone or similar compound as acceptor"/>
    <property type="evidence" value="ECO:0007669"/>
    <property type="project" value="InterPro"/>
</dbReference>
<dbReference type="Gene3D" id="3.40.50.360">
    <property type="match status" value="1"/>
</dbReference>
<dbReference type="HAMAP" id="MF_01216">
    <property type="entry name" value="Azoreductase_type1"/>
    <property type="match status" value="1"/>
</dbReference>
<dbReference type="InterPro" id="IPR003680">
    <property type="entry name" value="Flavodoxin_fold"/>
</dbReference>
<dbReference type="InterPro" id="IPR029039">
    <property type="entry name" value="Flavoprotein-like_sf"/>
</dbReference>
<dbReference type="InterPro" id="IPR050104">
    <property type="entry name" value="FMN-dep_NADH:Q_OxRdtase_AzoR1"/>
</dbReference>
<dbReference type="InterPro" id="IPR023048">
    <property type="entry name" value="NADH:quinone_OxRdtase_FMN_depd"/>
</dbReference>
<dbReference type="NCBIfam" id="NF010075">
    <property type="entry name" value="PRK13556.1"/>
    <property type="match status" value="1"/>
</dbReference>
<dbReference type="PANTHER" id="PTHR43741">
    <property type="entry name" value="FMN-DEPENDENT NADH-AZOREDUCTASE 1"/>
    <property type="match status" value="1"/>
</dbReference>
<dbReference type="PANTHER" id="PTHR43741:SF4">
    <property type="entry name" value="FMN-DEPENDENT NADH:QUINONE OXIDOREDUCTASE"/>
    <property type="match status" value="1"/>
</dbReference>
<dbReference type="Pfam" id="PF02525">
    <property type="entry name" value="Flavodoxin_2"/>
    <property type="match status" value="1"/>
</dbReference>
<dbReference type="SUPFAM" id="SSF52218">
    <property type="entry name" value="Flavoproteins"/>
    <property type="match status" value="1"/>
</dbReference>
<proteinExistence type="inferred from homology"/>
<organism>
    <name type="scientific">Bacillus cereus (strain ATCC 10987 / NRS 248)</name>
    <dbReference type="NCBI Taxonomy" id="222523"/>
    <lineage>
        <taxon>Bacteria</taxon>
        <taxon>Bacillati</taxon>
        <taxon>Bacillota</taxon>
        <taxon>Bacilli</taxon>
        <taxon>Bacillales</taxon>
        <taxon>Bacillaceae</taxon>
        <taxon>Bacillus</taxon>
        <taxon>Bacillus cereus group</taxon>
    </lineage>
</organism>
<keyword id="KW-0285">Flavoprotein</keyword>
<keyword id="KW-0288">FMN</keyword>
<keyword id="KW-0520">NAD</keyword>
<keyword id="KW-0560">Oxidoreductase</keyword>
<evidence type="ECO:0000255" key="1">
    <source>
        <dbReference type="HAMAP-Rule" id="MF_01216"/>
    </source>
</evidence>
<feature type="chain" id="PRO_0000245880" description="FMN-dependent NADH:quinone oxidoreductase 4">
    <location>
        <begin position="1"/>
        <end position="208"/>
    </location>
</feature>
<reference key="1">
    <citation type="journal article" date="2004" name="Nucleic Acids Res.">
        <title>The genome sequence of Bacillus cereus ATCC 10987 reveals metabolic adaptations and a large plasmid related to Bacillus anthracis pXO1.</title>
        <authorList>
            <person name="Rasko D.A."/>
            <person name="Ravel J."/>
            <person name="Oekstad O.A."/>
            <person name="Helgason E."/>
            <person name="Cer R.Z."/>
            <person name="Jiang L."/>
            <person name="Shores K.A."/>
            <person name="Fouts D.E."/>
            <person name="Tourasse N.J."/>
            <person name="Angiuoli S.V."/>
            <person name="Kolonay J.F."/>
            <person name="Nelson W.C."/>
            <person name="Kolstoe A.-B."/>
            <person name="Fraser C.M."/>
            <person name="Read T.D."/>
        </authorList>
    </citation>
    <scope>NUCLEOTIDE SEQUENCE [LARGE SCALE GENOMIC DNA]</scope>
    <source>
        <strain>ATCC 10987 / NRS 248</strain>
    </source>
</reference>
<accession>Q72X39</accession>
<gene>
    <name evidence="1" type="primary">azoR4</name>
    <name type="ordered locus">BCE_5539</name>
</gene>
<comment type="function">
    <text evidence="1">Quinone reductase that provides resistance to thiol-specific stress caused by electrophilic quinones.</text>
</comment>
<comment type="function">
    <text evidence="1">Also exhibits azoreductase activity. Catalyzes the reductive cleavage of the azo bond in aromatic azo compounds to the corresponding amines.</text>
</comment>
<comment type="catalytic activity">
    <reaction evidence="1">
        <text>2 a quinone + NADH + H(+) = 2 a 1,4-benzosemiquinone + NAD(+)</text>
        <dbReference type="Rhea" id="RHEA:65952"/>
        <dbReference type="ChEBI" id="CHEBI:15378"/>
        <dbReference type="ChEBI" id="CHEBI:57540"/>
        <dbReference type="ChEBI" id="CHEBI:57945"/>
        <dbReference type="ChEBI" id="CHEBI:132124"/>
        <dbReference type="ChEBI" id="CHEBI:134225"/>
    </reaction>
</comment>
<comment type="catalytic activity">
    <reaction evidence="1">
        <text>N,N-dimethyl-1,4-phenylenediamine + anthranilate + 2 NAD(+) = 2-(4-dimethylaminophenyl)diazenylbenzoate + 2 NADH + 2 H(+)</text>
        <dbReference type="Rhea" id="RHEA:55872"/>
        <dbReference type="ChEBI" id="CHEBI:15378"/>
        <dbReference type="ChEBI" id="CHEBI:15783"/>
        <dbReference type="ChEBI" id="CHEBI:16567"/>
        <dbReference type="ChEBI" id="CHEBI:57540"/>
        <dbReference type="ChEBI" id="CHEBI:57945"/>
        <dbReference type="ChEBI" id="CHEBI:71579"/>
        <dbReference type="EC" id="1.7.1.17"/>
    </reaction>
</comment>
<comment type="cofactor">
    <cofactor evidence="1">
        <name>FMN</name>
        <dbReference type="ChEBI" id="CHEBI:58210"/>
    </cofactor>
    <text evidence="1">Binds 1 FMN per subunit.</text>
</comment>
<comment type="subunit">
    <text evidence="1">Homodimer.</text>
</comment>
<comment type="similarity">
    <text evidence="1">Belongs to the azoreductase type 1 family.</text>
</comment>
<name>AZOR4_BACC1</name>